<name>PSBA_TRIAZ</name>
<keyword id="KW-0106">Calcium</keyword>
<keyword id="KW-0148">Chlorophyll</keyword>
<keyword id="KW-0157">Chromophore</keyword>
<keyword id="KW-0249">Electron transport</keyword>
<keyword id="KW-0359">Herbicide resistance</keyword>
<keyword id="KW-0408">Iron</keyword>
<keyword id="KW-0460">Magnesium</keyword>
<keyword id="KW-0464">Manganese</keyword>
<keyword id="KW-0472">Membrane</keyword>
<keyword id="KW-0479">Metal-binding</keyword>
<keyword id="KW-0560">Oxidoreductase</keyword>
<keyword id="KW-0602">Photosynthesis</keyword>
<keyword id="KW-0604">Photosystem II</keyword>
<keyword id="KW-0793">Thylakoid</keyword>
<keyword id="KW-0812">Transmembrane</keyword>
<keyword id="KW-1133">Transmembrane helix</keyword>
<keyword id="KW-0813">Transport</keyword>
<evidence type="ECO:0000255" key="1">
    <source>
        <dbReference type="HAMAP-Rule" id="MF_01379"/>
    </source>
</evidence>
<sequence length="360" mass="39540">MTTTLQQRSTANVWDRFCEWITSTENRIYIGWFGVLMIPTLVSAIACFVIAFIAAPPVDIDGIREPVAGSLLYGNNIISGAVVPSSNAIGLHFYPIWEAASLDEWLYNGGPYQLVIFHFLIGVACYLGREWELSYRLGMRPWICVAFSAPVAAATAVFLIYPIGQGSFSDGMPLGISGTFNFMIVFQAEHNILMHPFHMLGVAGVFGGSLFSAMHGSLVTSSLVRETTETESQNYGYKFGQEEETYNIVAAHGYFGRLIFQYASFNNSRSLHFFLAAWPVIGIWFTALGVSTMAFNLNGFNFNQSIIDSQGRVIGTWADVINRANLGMEVMHERNAHNFPLDLAAGDVAPVALTAPPING</sequence>
<reference key="1">
    <citation type="submission" date="1992-01" db="EMBL/GenBank/DDBJ databases">
        <title>Characterization of psbA gene family expression in symbiotic Anabaena azollae.</title>
        <authorList>
            <person name="Gebhardt J.S."/>
            <person name="Nierzwicki-Bauer S.A."/>
        </authorList>
    </citation>
    <scope>NUCLEOTIDE SEQUENCE [GENOMIC DNA]</scope>
    <source>
        <strain>Caroliniana</strain>
    </source>
</reference>
<comment type="function">
    <text evidence="1">Photosystem II (PSII) is a light-driven water:plastoquinone oxidoreductase that uses light energy to abstract electrons from H(2)O, generating O(2) and a proton gradient subsequently used for ATP formation. It consists of a core antenna complex that captures photons, and an electron transfer chain that converts photonic excitation into a charge separation. The D1/D2 (PsbA/PsbD) reaction center heterodimer binds P680, the primary electron donor of PSII as well as several subsequent electron acceptors.</text>
</comment>
<comment type="catalytic activity">
    <reaction evidence="1">
        <text>2 a plastoquinone + 4 hnu + 2 H2O = 2 a plastoquinol + O2</text>
        <dbReference type="Rhea" id="RHEA:36359"/>
        <dbReference type="Rhea" id="RHEA-COMP:9561"/>
        <dbReference type="Rhea" id="RHEA-COMP:9562"/>
        <dbReference type="ChEBI" id="CHEBI:15377"/>
        <dbReference type="ChEBI" id="CHEBI:15379"/>
        <dbReference type="ChEBI" id="CHEBI:17757"/>
        <dbReference type="ChEBI" id="CHEBI:30212"/>
        <dbReference type="ChEBI" id="CHEBI:62192"/>
        <dbReference type="EC" id="1.10.3.9"/>
    </reaction>
</comment>
<comment type="cofactor">
    <text evidence="1">The D1/D2 heterodimer binds P680, chlorophylls that are the primary electron donor of PSII, and subsequent electron acceptors. It shares a non-heme iron and each subunit binds pheophytin, quinone, additional chlorophylls, carotenoids and lipids. D1 provides most of the ligands for the Mn4-Ca-O5 cluster of the oxygen-evolving complex (OEC). There is also a Cl(-1) ion associated with D1 and D2, which is required for oxygen evolution. The PSII complex binds additional chlorophylls, carotenoids and specific lipids.</text>
</comment>
<comment type="subunit">
    <text evidence="1">PSII is composed of 1 copy each of membrane proteins PsbA, PsbB, PsbC, PsbD, PsbE, PsbF, PsbH, PsbI, PsbJ, PsbK, PsbL, PsbM, PsbT, PsbX, PsbY, PsbZ, Psb30/Ycf12, peripheral proteins PsbO, CyanoQ (PsbQ), PsbU, PsbV and a large number of cofactors. It forms dimeric complexes.</text>
</comment>
<comment type="subcellular location">
    <subcellularLocation>
        <location evidence="1">Cellular thylakoid membrane</location>
        <topology evidence="1">Multi-pass membrane protein</topology>
    </subcellularLocation>
</comment>
<comment type="PTM">
    <text evidence="1">Tyr-161 forms a radical intermediate that is referred to as redox-active TyrZ, YZ or Y-Z.</text>
</comment>
<comment type="PTM">
    <text evidence="1">C-terminally processed by CtpA; processing is essential to allow assembly of the oxygen-evolving complex and thus photosynthetic growth.</text>
</comment>
<comment type="miscellaneous">
    <text evidence="1">Cyanobacteria usually contain more than 2 copies of the psbA gene.</text>
</comment>
<comment type="miscellaneous">
    <text evidence="1">2 of the reaction center chlorophylls (ChlD1 and ChlD2) are entirely coordinated by water.</text>
</comment>
<comment type="miscellaneous">
    <text evidence="1">Herbicides such as atrazine, BNT, diuron or ioxynil bind in the Q(B) binding site and block subsequent electron transfer.</text>
</comment>
<comment type="similarity">
    <text evidence="1">Belongs to the reaction center PufL/M/PsbA/D family.</text>
</comment>
<dbReference type="EC" id="1.10.3.9" evidence="1"/>
<dbReference type="EMBL" id="X64174">
    <property type="protein sequence ID" value="CAA45515.1"/>
    <property type="molecule type" value="Genomic_DNA"/>
</dbReference>
<dbReference type="PIR" id="S18959">
    <property type="entry name" value="F2AI1Z"/>
</dbReference>
<dbReference type="SMR" id="P29270"/>
<dbReference type="OMA" id="HERNANN"/>
<dbReference type="GO" id="GO:0009523">
    <property type="term" value="C:photosystem II"/>
    <property type="evidence" value="ECO:0007669"/>
    <property type="project" value="UniProtKB-KW"/>
</dbReference>
<dbReference type="GO" id="GO:0031676">
    <property type="term" value="C:plasma membrane-derived thylakoid membrane"/>
    <property type="evidence" value="ECO:0007669"/>
    <property type="project" value="UniProtKB-SubCell"/>
</dbReference>
<dbReference type="GO" id="GO:0016168">
    <property type="term" value="F:chlorophyll binding"/>
    <property type="evidence" value="ECO:0007669"/>
    <property type="project" value="UniProtKB-UniRule"/>
</dbReference>
<dbReference type="GO" id="GO:0045156">
    <property type="term" value="F:electron transporter, transferring electrons within the cyclic electron transport pathway of photosynthesis activity"/>
    <property type="evidence" value="ECO:0007669"/>
    <property type="project" value="InterPro"/>
</dbReference>
<dbReference type="GO" id="GO:0005506">
    <property type="term" value="F:iron ion binding"/>
    <property type="evidence" value="ECO:0007669"/>
    <property type="project" value="UniProtKB-UniRule"/>
</dbReference>
<dbReference type="GO" id="GO:0016682">
    <property type="term" value="F:oxidoreductase activity, acting on diphenols and related substances as donors, oxygen as acceptor"/>
    <property type="evidence" value="ECO:0007669"/>
    <property type="project" value="UniProtKB-UniRule"/>
</dbReference>
<dbReference type="GO" id="GO:0010242">
    <property type="term" value="F:oxygen evolving activity"/>
    <property type="evidence" value="ECO:0007669"/>
    <property type="project" value="UniProtKB-EC"/>
</dbReference>
<dbReference type="GO" id="GO:0009772">
    <property type="term" value="P:photosynthetic electron transport in photosystem II"/>
    <property type="evidence" value="ECO:0007669"/>
    <property type="project" value="InterPro"/>
</dbReference>
<dbReference type="GO" id="GO:0009635">
    <property type="term" value="P:response to herbicide"/>
    <property type="evidence" value="ECO:0007669"/>
    <property type="project" value="UniProtKB-KW"/>
</dbReference>
<dbReference type="CDD" id="cd09289">
    <property type="entry name" value="Photosystem-II_D1"/>
    <property type="match status" value="1"/>
</dbReference>
<dbReference type="FunFam" id="1.20.85.10:FF:000002">
    <property type="entry name" value="Photosystem II protein D1"/>
    <property type="match status" value="1"/>
</dbReference>
<dbReference type="Gene3D" id="1.20.85.10">
    <property type="entry name" value="Photosystem II protein D1-like"/>
    <property type="match status" value="2"/>
</dbReference>
<dbReference type="HAMAP" id="MF_01379">
    <property type="entry name" value="PSII_PsbA_D1"/>
    <property type="match status" value="1"/>
</dbReference>
<dbReference type="InterPro" id="IPR055266">
    <property type="entry name" value="D1/D2"/>
</dbReference>
<dbReference type="InterPro" id="IPR036854">
    <property type="entry name" value="Photo_II_D1/D2_sf"/>
</dbReference>
<dbReference type="InterPro" id="IPR000484">
    <property type="entry name" value="Photo_RC_L/M"/>
</dbReference>
<dbReference type="InterPro" id="IPR055265">
    <property type="entry name" value="Photo_RC_L/M_CS"/>
</dbReference>
<dbReference type="InterPro" id="IPR005867">
    <property type="entry name" value="PSII_D1"/>
</dbReference>
<dbReference type="NCBIfam" id="TIGR01151">
    <property type="entry name" value="psbA"/>
    <property type="match status" value="1"/>
</dbReference>
<dbReference type="PANTHER" id="PTHR33149:SF12">
    <property type="entry name" value="PHOTOSYSTEM II D2 PROTEIN"/>
    <property type="match status" value="1"/>
</dbReference>
<dbReference type="PANTHER" id="PTHR33149">
    <property type="entry name" value="PHOTOSYSTEM II PROTEIN D1"/>
    <property type="match status" value="1"/>
</dbReference>
<dbReference type="Pfam" id="PF00124">
    <property type="entry name" value="Photo_RC"/>
    <property type="match status" value="1"/>
</dbReference>
<dbReference type="PRINTS" id="PR00256">
    <property type="entry name" value="REACTNCENTRE"/>
</dbReference>
<dbReference type="SUPFAM" id="SSF81483">
    <property type="entry name" value="Bacterial photosystem II reaction centre, L and M subunits"/>
    <property type="match status" value="1"/>
</dbReference>
<dbReference type="PROSITE" id="PS00244">
    <property type="entry name" value="REACTION_CENTER"/>
    <property type="match status" value="1"/>
</dbReference>
<proteinExistence type="inferred from homology"/>
<protein>
    <recommendedName>
        <fullName evidence="1">Photosystem II protein D1</fullName>
        <shortName evidence="1">PSII D1 protein</shortName>
        <ecNumber evidence="1">1.10.3.9</ecNumber>
    </recommendedName>
    <alternativeName>
        <fullName evidence="1">Photosystem II Q(B) protein</fullName>
    </alternativeName>
</protein>
<feature type="chain" id="PRO_0000090477" description="Photosystem II protein D1" evidence="1">
    <location>
        <begin position="1"/>
        <end position="344"/>
    </location>
</feature>
<feature type="propeptide" id="PRO_0000316335" evidence="1">
    <location>
        <begin position="345"/>
        <end position="360"/>
    </location>
</feature>
<feature type="transmembrane region" description="Helical" evidence="1">
    <location>
        <begin position="29"/>
        <end position="46"/>
    </location>
</feature>
<feature type="transmembrane region" description="Helical" evidence="1">
    <location>
        <begin position="118"/>
        <end position="133"/>
    </location>
</feature>
<feature type="transmembrane region" description="Helical" evidence="1">
    <location>
        <begin position="142"/>
        <end position="156"/>
    </location>
</feature>
<feature type="transmembrane region" description="Helical" evidence="1">
    <location>
        <begin position="197"/>
        <end position="218"/>
    </location>
</feature>
<feature type="transmembrane region" description="Helical" evidence="1">
    <location>
        <begin position="274"/>
        <end position="288"/>
    </location>
</feature>
<feature type="binding site" description="axial binding residue" evidence="1">
    <location>
        <position position="118"/>
    </location>
    <ligand>
        <name>chlorophyll a</name>
        <dbReference type="ChEBI" id="CHEBI:58416"/>
        <label>ChlzD1</label>
    </ligand>
    <ligandPart>
        <name>Mg</name>
        <dbReference type="ChEBI" id="CHEBI:25107"/>
    </ligandPart>
</feature>
<feature type="binding site" evidence="1">
    <location>
        <position position="126"/>
    </location>
    <ligand>
        <name>pheophytin a</name>
        <dbReference type="ChEBI" id="CHEBI:136840"/>
        <label>D1</label>
    </ligand>
</feature>
<feature type="binding site" evidence="1">
    <location>
        <position position="170"/>
    </location>
    <ligand>
        <name>[CaMn4O5] cluster</name>
        <dbReference type="ChEBI" id="CHEBI:189552"/>
    </ligand>
</feature>
<feature type="binding site" evidence="1">
    <location>
        <position position="189"/>
    </location>
    <ligand>
        <name>[CaMn4O5] cluster</name>
        <dbReference type="ChEBI" id="CHEBI:189552"/>
    </ligand>
</feature>
<feature type="binding site" description="axial binding residue" evidence="1">
    <location>
        <position position="198"/>
    </location>
    <ligand>
        <name>chlorophyll a</name>
        <dbReference type="ChEBI" id="CHEBI:58416"/>
        <label>PD1</label>
    </ligand>
    <ligandPart>
        <name>Mg</name>
        <dbReference type="ChEBI" id="CHEBI:25107"/>
    </ligandPart>
</feature>
<feature type="binding site" evidence="1">
    <location>
        <position position="215"/>
    </location>
    <ligand>
        <name>a quinone</name>
        <dbReference type="ChEBI" id="CHEBI:132124"/>
        <label>B</label>
    </ligand>
</feature>
<feature type="binding site" evidence="1">
    <location>
        <position position="215"/>
    </location>
    <ligand>
        <name>Fe cation</name>
        <dbReference type="ChEBI" id="CHEBI:24875"/>
        <note>ligand shared with heterodimeric partner</note>
    </ligand>
</feature>
<feature type="binding site" evidence="1">
    <location>
        <begin position="264"/>
        <end position="265"/>
    </location>
    <ligand>
        <name>a quinone</name>
        <dbReference type="ChEBI" id="CHEBI:132124"/>
        <label>B</label>
    </ligand>
</feature>
<feature type="binding site" evidence="1">
    <location>
        <position position="272"/>
    </location>
    <ligand>
        <name>Fe cation</name>
        <dbReference type="ChEBI" id="CHEBI:24875"/>
        <note>ligand shared with heterodimeric partner</note>
    </ligand>
</feature>
<feature type="binding site" evidence="1">
    <location>
        <position position="332"/>
    </location>
    <ligand>
        <name>[CaMn4O5] cluster</name>
        <dbReference type="ChEBI" id="CHEBI:189552"/>
    </ligand>
</feature>
<feature type="binding site" evidence="1">
    <location>
        <position position="333"/>
    </location>
    <ligand>
        <name>[CaMn4O5] cluster</name>
        <dbReference type="ChEBI" id="CHEBI:189552"/>
    </ligand>
</feature>
<feature type="binding site" evidence="1">
    <location>
        <position position="342"/>
    </location>
    <ligand>
        <name>[CaMn4O5] cluster</name>
        <dbReference type="ChEBI" id="CHEBI:189552"/>
    </ligand>
</feature>
<feature type="binding site" evidence="1">
    <location>
        <position position="344"/>
    </location>
    <ligand>
        <name>[CaMn4O5] cluster</name>
        <dbReference type="ChEBI" id="CHEBI:189552"/>
    </ligand>
</feature>
<feature type="site" description="Tyrosine radical intermediate" evidence="1">
    <location>
        <position position="161"/>
    </location>
</feature>
<feature type="site" description="Stabilizes free radical intermediate" evidence="1">
    <location>
        <position position="190"/>
    </location>
</feature>
<feature type="site" description="Cleavage; by CtpA" evidence="1">
    <location>
        <begin position="344"/>
        <end position="345"/>
    </location>
</feature>
<gene>
    <name evidence="1" type="primary">psbA</name>
</gene>
<organism>
    <name type="scientific">Trichormus azollae</name>
    <name type="common">Anabaena azollae</name>
    <dbReference type="NCBI Taxonomy" id="1164"/>
    <lineage>
        <taxon>Bacteria</taxon>
        <taxon>Bacillati</taxon>
        <taxon>Cyanobacteriota</taxon>
        <taxon>Cyanophyceae</taxon>
        <taxon>Nostocales</taxon>
        <taxon>Nostocaceae</taxon>
        <taxon>Trichormus</taxon>
    </lineage>
</organism>
<accession>P29270</accession>